<name>OPF15_ARATH</name>
<protein>
    <recommendedName>
        <fullName>Transcription repressor OFP15</fullName>
    </recommendedName>
    <alternativeName>
        <fullName>Ovate family protein 15</fullName>
        <shortName>AtOFP15</shortName>
    </alternativeName>
</protein>
<feature type="chain" id="PRO_0000429684" description="Transcription repressor OFP15">
    <location>
        <begin position="1"/>
        <end position="261"/>
    </location>
</feature>
<feature type="domain" description="OVATE" evidence="2">
    <location>
        <begin position="112"/>
        <end position="172"/>
    </location>
</feature>
<feature type="region of interest" description="Disordered" evidence="3">
    <location>
        <begin position="1"/>
        <end position="28"/>
    </location>
</feature>
<feature type="compositionally biased region" description="Low complexity" evidence="3">
    <location>
        <begin position="11"/>
        <end position="28"/>
    </location>
</feature>
<feature type="sequence conflict" description="In Ref. 3; BAC43095." evidence="6" ref="3">
    <original>D</original>
    <variation>G</variation>
    <location>
        <position position="54"/>
    </location>
</feature>
<feature type="sequence conflict" description="In Ref. 3; BAC43095." evidence="6" ref="3">
    <original>D</original>
    <variation>G</variation>
    <location>
        <position position="176"/>
    </location>
</feature>
<feature type="sequence conflict" description="In Ref. 3; BAC43095." evidence="6" ref="3">
    <original>S</original>
    <variation>F</variation>
    <location>
        <position position="219"/>
    </location>
</feature>
<dbReference type="EMBL" id="AC007017">
    <property type="protein sequence ID" value="AAD21452.1"/>
    <property type="molecule type" value="Genomic_DNA"/>
</dbReference>
<dbReference type="EMBL" id="CP002685">
    <property type="protein sequence ID" value="AEC09197.1"/>
    <property type="molecule type" value="Genomic_DNA"/>
</dbReference>
<dbReference type="EMBL" id="AK118491">
    <property type="protein sequence ID" value="BAC43095.1"/>
    <property type="molecule type" value="mRNA"/>
</dbReference>
<dbReference type="EMBL" id="AY044326">
    <property type="protein sequence ID" value="AAK73267.1"/>
    <property type="molecule type" value="mRNA"/>
</dbReference>
<dbReference type="PIR" id="C84776">
    <property type="entry name" value="C84776"/>
</dbReference>
<dbReference type="RefSeq" id="NP_565833.1">
    <property type="nucleotide sequence ID" value="NM_129164.3"/>
</dbReference>
<dbReference type="BioGRID" id="3522">
    <property type="interactions" value="3"/>
</dbReference>
<dbReference type="IntAct" id="Q9SJ45">
    <property type="interactions" value="3"/>
</dbReference>
<dbReference type="STRING" id="3702.Q9SJ45"/>
<dbReference type="PaxDb" id="3702-AT2G36050.1"/>
<dbReference type="EnsemblPlants" id="AT2G36050.1">
    <property type="protein sequence ID" value="AT2G36050.1"/>
    <property type="gene ID" value="AT2G36050"/>
</dbReference>
<dbReference type="GeneID" id="818178"/>
<dbReference type="Gramene" id="AT2G36050.1">
    <property type="protein sequence ID" value="AT2G36050.1"/>
    <property type="gene ID" value="AT2G36050"/>
</dbReference>
<dbReference type="KEGG" id="ath:AT2G36050"/>
<dbReference type="Araport" id="AT2G36050"/>
<dbReference type="TAIR" id="AT2G36050">
    <property type="gene designation" value="OFP15"/>
</dbReference>
<dbReference type="eggNOG" id="ENOG502RFQ4">
    <property type="taxonomic scope" value="Eukaryota"/>
</dbReference>
<dbReference type="HOGENOM" id="CLU_066339_1_0_1"/>
<dbReference type="InParanoid" id="Q9SJ45"/>
<dbReference type="OMA" id="CHQPKTH"/>
<dbReference type="OrthoDB" id="689823at2759"/>
<dbReference type="PhylomeDB" id="Q9SJ45"/>
<dbReference type="PRO" id="PR:Q9SJ45"/>
<dbReference type="Proteomes" id="UP000006548">
    <property type="component" value="Chromosome 2"/>
</dbReference>
<dbReference type="ExpressionAtlas" id="Q9SJ45">
    <property type="expression patterns" value="baseline and differential"/>
</dbReference>
<dbReference type="GO" id="GO:0005634">
    <property type="term" value="C:nucleus"/>
    <property type="evidence" value="ECO:0007669"/>
    <property type="project" value="UniProtKB-SubCell"/>
</dbReference>
<dbReference type="GO" id="GO:0045892">
    <property type="term" value="P:negative regulation of DNA-templated transcription"/>
    <property type="evidence" value="ECO:0000314"/>
    <property type="project" value="TAIR"/>
</dbReference>
<dbReference type="InterPro" id="IPR038933">
    <property type="entry name" value="Ovate"/>
</dbReference>
<dbReference type="InterPro" id="IPR006458">
    <property type="entry name" value="Ovate_C"/>
</dbReference>
<dbReference type="NCBIfam" id="TIGR01568">
    <property type="entry name" value="A_thal_3678"/>
    <property type="match status" value="1"/>
</dbReference>
<dbReference type="PANTHER" id="PTHR33057:SF130">
    <property type="entry name" value="TRANSCRIPTION REPRESSOR OFP15"/>
    <property type="match status" value="1"/>
</dbReference>
<dbReference type="PANTHER" id="PTHR33057">
    <property type="entry name" value="TRANSCRIPTION REPRESSOR OFP7-RELATED"/>
    <property type="match status" value="1"/>
</dbReference>
<dbReference type="Pfam" id="PF04844">
    <property type="entry name" value="Ovate"/>
    <property type="match status" value="1"/>
</dbReference>
<dbReference type="PROSITE" id="PS51754">
    <property type="entry name" value="OVATE"/>
    <property type="match status" value="1"/>
</dbReference>
<gene>
    <name type="primary">OFP15</name>
    <name type="ordered locus">At2g36050</name>
    <name type="ORF">F11F19.32</name>
</gene>
<evidence type="ECO:0000250" key="1"/>
<evidence type="ECO:0000255" key="2">
    <source>
        <dbReference type="PROSITE-ProRule" id="PRU01090"/>
    </source>
</evidence>
<evidence type="ECO:0000256" key="3">
    <source>
        <dbReference type="SAM" id="MobiDB-lite"/>
    </source>
</evidence>
<evidence type="ECO:0000269" key="4">
    <source>
    </source>
</evidence>
<evidence type="ECO:0000269" key="5">
    <source>
    </source>
</evidence>
<evidence type="ECO:0000305" key="6"/>
<evidence type="ECO:0000305" key="7">
    <source>
    </source>
</evidence>
<accession>Q9SJ45</accession>
<accession>Q8GX20</accession>
<organism>
    <name type="scientific">Arabidopsis thaliana</name>
    <name type="common">Mouse-ear cress</name>
    <dbReference type="NCBI Taxonomy" id="3702"/>
    <lineage>
        <taxon>Eukaryota</taxon>
        <taxon>Viridiplantae</taxon>
        <taxon>Streptophyta</taxon>
        <taxon>Embryophyta</taxon>
        <taxon>Tracheophyta</taxon>
        <taxon>Spermatophyta</taxon>
        <taxon>Magnoliopsida</taxon>
        <taxon>eudicotyledons</taxon>
        <taxon>Gunneridae</taxon>
        <taxon>Pentapetalae</taxon>
        <taxon>rosids</taxon>
        <taxon>malvids</taxon>
        <taxon>Brassicales</taxon>
        <taxon>Brassicaceae</taxon>
        <taxon>Camelineae</taxon>
        <taxon>Arabidopsis</taxon>
    </lineage>
</organism>
<reference key="1">
    <citation type="journal article" date="1999" name="Nature">
        <title>Sequence and analysis of chromosome 2 of the plant Arabidopsis thaliana.</title>
        <authorList>
            <person name="Lin X."/>
            <person name="Kaul S."/>
            <person name="Rounsley S.D."/>
            <person name="Shea T.P."/>
            <person name="Benito M.-I."/>
            <person name="Town C.D."/>
            <person name="Fujii C.Y."/>
            <person name="Mason T.M."/>
            <person name="Bowman C.L."/>
            <person name="Barnstead M.E."/>
            <person name="Feldblyum T.V."/>
            <person name="Buell C.R."/>
            <person name="Ketchum K.A."/>
            <person name="Lee J.J."/>
            <person name="Ronning C.M."/>
            <person name="Koo H.L."/>
            <person name="Moffat K.S."/>
            <person name="Cronin L.A."/>
            <person name="Shen M."/>
            <person name="Pai G."/>
            <person name="Van Aken S."/>
            <person name="Umayam L."/>
            <person name="Tallon L.J."/>
            <person name="Gill J.E."/>
            <person name="Adams M.D."/>
            <person name="Carrera A.J."/>
            <person name="Creasy T.H."/>
            <person name="Goodman H.M."/>
            <person name="Somerville C.R."/>
            <person name="Copenhaver G.P."/>
            <person name="Preuss D."/>
            <person name="Nierman W.C."/>
            <person name="White O."/>
            <person name="Eisen J.A."/>
            <person name="Salzberg S.L."/>
            <person name="Fraser C.M."/>
            <person name="Venter J.C."/>
        </authorList>
    </citation>
    <scope>NUCLEOTIDE SEQUENCE [LARGE SCALE GENOMIC DNA]</scope>
    <source>
        <strain>cv. Columbia</strain>
    </source>
</reference>
<reference key="2">
    <citation type="journal article" date="2017" name="Plant J.">
        <title>Araport11: a complete reannotation of the Arabidopsis thaliana reference genome.</title>
        <authorList>
            <person name="Cheng C.Y."/>
            <person name="Krishnakumar V."/>
            <person name="Chan A.P."/>
            <person name="Thibaud-Nissen F."/>
            <person name="Schobel S."/>
            <person name="Town C.D."/>
        </authorList>
    </citation>
    <scope>GENOME REANNOTATION</scope>
    <source>
        <strain>cv. Columbia</strain>
    </source>
</reference>
<reference key="3">
    <citation type="journal article" date="2002" name="Science">
        <title>Functional annotation of a full-length Arabidopsis cDNA collection.</title>
        <authorList>
            <person name="Seki M."/>
            <person name="Narusaka M."/>
            <person name="Kamiya A."/>
            <person name="Ishida J."/>
            <person name="Satou M."/>
            <person name="Sakurai T."/>
            <person name="Nakajima M."/>
            <person name="Enju A."/>
            <person name="Akiyama K."/>
            <person name="Oono Y."/>
            <person name="Muramatsu M."/>
            <person name="Hayashizaki Y."/>
            <person name="Kawai J."/>
            <person name="Carninci P."/>
            <person name="Itoh M."/>
            <person name="Ishii Y."/>
            <person name="Arakawa T."/>
            <person name="Shibata K."/>
            <person name="Shinagawa A."/>
            <person name="Shinozaki K."/>
        </authorList>
    </citation>
    <scope>NUCLEOTIDE SEQUENCE [LARGE SCALE MRNA]</scope>
    <source>
        <strain>cv. Columbia</strain>
    </source>
</reference>
<reference key="4">
    <citation type="journal article" date="2003" name="Science">
        <title>Empirical analysis of transcriptional activity in the Arabidopsis genome.</title>
        <authorList>
            <person name="Yamada K."/>
            <person name="Lim J."/>
            <person name="Dale J.M."/>
            <person name="Chen H."/>
            <person name="Shinn P."/>
            <person name="Palm C.J."/>
            <person name="Southwick A.M."/>
            <person name="Wu H.C."/>
            <person name="Kim C.J."/>
            <person name="Nguyen M."/>
            <person name="Pham P.K."/>
            <person name="Cheuk R.F."/>
            <person name="Karlin-Newmann G."/>
            <person name="Liu S.X."/>
            <person name="Lam B."/>
            <person name="Sakano H."/>
            <person name="Wu T."/>
            <person name="Yu G."/>
            <person name="Miranda M."/>
            <person name="Quach H.L."/>
            <person name="Tripp M."/>
            <person name="Chang C.H."/>
            <person name="Lee J.M."/>
            <person name="Toriumi M.J."/>
            <person name="Chan M.M."/>
            <person name="Tang C.C."/>
            <person name="Onodera C.S."/>
            <person name="Deng J.M."/>
            <person name="Akiyama K."/>
            <person name="Ansari Y."/>
            <person name="Arakawa T."/>
            <person name="Banh J."/>
            <person name="Banno F."/>
            <person name="Bowser L."/>
            <person name="Brooks S.Y."/>
            <person name="Carninci P."/>
            <person name="Chao Q."/>
            <person name="Choy N."/>
            <person name="Enju A."/>
            <person name="Goldsmith A.D."/>
            <person name="Gurjal M."/>
            <person name="Hansen N.F."/>
            <person name="Hayashizaki Y."/>
            <person name="Johnson-Hopson C."/>
            <person name="Hsuan V.W."/>
            <person name="Iida K."/>
            <person name="Karnes M."/>
            <person name="Khan S."/>
            <person name="Koesema E."/>
            <person name="Ishida J."/>
            <person name="Jiang P.X."/>
            <person name="Jones T."/>
            <person name="Kawai J."/>
            <person name="Kamiya A."/>
            <person name="Meyers C."/>
            <person name="Nakajima M."/>
            <person name="Narusaka M."/>
            <person name="Seki M."/>
            <person name="Sakurai T."/>
            <person name="Satou M."/>
            <person name="Tamse R."/>
            <person name="Vaysberg M."/>
            <person name="Wallender E.K."/>
            <person name="Wong C."/>
            <person name="Yamamura Y."/>
            <person name="Yuan S."/>
            <person name="Shinozaki K."/>
            <person name="Davis R.W."/>
            <person name="Theologis A."/>
            <person name="Ecker J.R."/>
        </authorList>
    </citation>
    <scope>NUCLEOTIDE SEQUENCE [LARGE SCALE MRNA]</scope>
    <source>
        <strain>cv. Columbia</strain>
    </source>
</reference>
<reference key="5">
    <citation type="journal article" date="2005" name="Proc. Natl. Acad. Sci. U.S.A.">
        <title>A central role of Arabidopsis thaliana ovate family proteins in networking and subcellular localization of 3-aa loop extension homeodomain proteins.</title>
        <authorList>
            <person name="Hackbusch J."/>
            <person name="Richter K."/>
            <person name="Muller J."/>
            <person name="Salamini F."/>
            <person name="Uhrig J.F."/>
        </authorList>
    </citation>
    <scope>INTERACTION WITH BLH1 AND BLH3</scope>
</reference>
<reference key="6">
    <citation type="journal article" date="2011" name="PLoS ONE">
        <title>Arabidopsis ovate family proteins, a novel transcriptional repressor family, control multiple aspects of plant growth and development.</title>
        <authorList>
            <person name="Wang S."/>
            <person name="Chang Y."/>
            <person name="Guo J."/>
            <person name="Zeng Q."/>
            <person name="Ellis B.E."/>
            <person name="Chen J.G."/>
        </authorList>
    </citation>
    <scope>FUNCTION</scope>
    <scope>TISSUE SPECIFICITY</scope>
    <scope>GENE FAMILY</scope>
    <scope>DISRUPTION PHENOTYPE</scope>
</reference>
<keyword id="KW-0539">Nucleus</keyword>
<keyword id="KW-1185">Reference proteome</keyword>
<keyword id="KW-0678">Repressor</keyword>
<keyword id="KW-0804">Transcription</keyword>
<keyword id="KW-0805">Transcription regulation</keyword>
<comment type="function">
    <text evidence="5">Transcriptional repressor that regulates multiple aspects of plant growth and development through the regulation of BEL1-LIKE (BLH) and KNOX TALE (KNAT) homeodomain transcription factors.</text>
</comment>
<comment type="subunit">
    <text evidence="4">Interacts with BLH1 and BLH3.</text>
</comment>
<comment type="subcellular location">
    <subcellularLocation>
        <location evidence="1">Nucleus</location>
    </subcellularLocation>
</comment>
<comment type="tissue specificity">
    <text evidence="5">Expressed in roots, cauline leaves, shoots, flower buds and siliques.</text>
</comment>
<comment type="disruption phenotype">
    <text evidence="5">No visible phenotype under normal growth conditions.</text>
</comment>
<comment type="miscellaneous">
    <text evidence="7">Plants over-expressing OFP15 show small rosette size, late flowering, reduced fertilization and blunt-end siliques.</text>
</comment>
<proteinExistence type="evidence at protein level"/>
<sequence>MKLPFLNKNHSTSSYSSNSSSSSWPWPSCNQNPKTLSFRATITFTNPIHDQDDDELDLLDPPEITDSVENVIKGLRSSERLIFESKGETNSILEEATSKREEEDEEEGFMLFSLESDDPYSDFKRSMEEMVEAHALHHDWKSLEKLLLQFLKVNAKTSHRYIFAAFVDLLMNLALDTKKAIINNDISKDDGVSASRAAAAGEASTSCCNSMTLGESPSSPLSFYTSCSSSSSSDETSSMSVRFLPLSSLLEMDEKTKEILV</sequence>